<accession>Q92QH7</accession>
<dbReference type="EC" id="2.7.7.6" evidence="1"/>
<dbReference type="EMBL" id="AL591688">
    <property type="protein sequence ID" value="CAC45927.1"/>
    <property type="molecule type" value="Genomic_DNA"/>
</dbReference>
<dbReference type="RefSeq" id="NP_385454.1">
    <property type="nucleotide sequence ID" value="NC_003047.1"/>
</dbReference>
<dbReference type="RefSeq" id="WP_003536195.1">
    <property type="nucleotide sequence ID" value="NC_003047.1"/>
</dbReference>
<dbReference type="SMR" id="Q92QH7"/>
<dbReference type="EnsemblBacteria" id="CAC45927">
    <property type="protein sequence ID" value="CAC45927"/>
    <property type="gene ID" value="SMc01317"/>
</dbReference>
<dbReference type="GeneID" id="89575672"/>
<dbReference type="KEGG" id="sme:SMc01317"/>
<dbReference type="PATRIC" id="fig|266834.11.peg.2763"/>
<dbReference type="eggNOG" id="COG0085">
    <property type="taxonomic scope" value="Bacteria"/>
</dbReference>
<dbReference type="HOGENOM" id="CLU_000524_4_0_5"/>
<dbReference type="OrthoDB" id="9803954at2"/>
<dbReference type="Proteomes" id="UP000001976">
    <property type="component" value="Chromosome"/>
</dbReference>
<dbReference type="GO" id="GO:0000428">
    <property type="term" value="C:DNA-directed RNA polymerase complex"/>
    <property type="evidence" value="ECO:0007669"/>
    <property type="project" value="UniProtKB-KW"/>
</dbReference>
<dbReference type="GO" id="GO:0003677">
    <property type="term" value="F:DNA binding"/>
    <property type="evidence" value="ECO:0007669"/>
    <property type="project" value="UniProtKB-UniRule"/>
</dbReference>
<dbReference type="GO" id="GO:0003899">
    <property type="term" value="F:DNA-directed RNA polymerase activity"/>
    <property type="evidence" value="ECO:0007669"/>
    <property type="project" value="UniProtKB-UniRule"/>
</dbReference>
<dbReference type="GO" id="GO:0032549">
    <property type="term" value="F:ribonucleoside binding"/>
    <property type="evidence" value="ECO:0007669"/>
    <property type="project" value="InterPro"/>
</dbReference>
<dbReference type="GO" id="GO:0006351">
    <property type="term" value="P:DNA-templated transcription"/>
    <property type="evidence" value="ECO:0007669"/>
    <property type="project" value="UniProtKB-UniRule"/>
</dbReference>
<dbReference type="CDD" id="cd00653">
    <property type="entry name" value="RNA_pol_B_RPB2"/>
    <property type="match status" value="1"/>
</dbReference>
<dbReference type="FunFam" id="2.40.50.100:FF:000006">
    <property type="entry name" value="DNA-directed RNA polymerase subunit beta"/>
    <property type="match status" value="1"/>
</dbReference>
<dbReference type="FunFam" id="3.90.1800.10:FF:000001">
    <property type="entry name" value="DNA-directed RNA polymerase subunit beta"/>
    <property type="match status" value="1"/>
</dbReference>
<dbReference type="Gene3D" id="2.40.50.100">
    <property type="match status" value="1"/>
</dbReference>
<dbReference type="Gene3D" id="2.40.50.150">
    <property type="match status" value="1"/>
</dbReference>
<dbReference type="Gene3D" id="3.90.1100.10">
    <property type="match status" value="2"/>
</dbReference>
<dbReference type="Gene3D" id="2.30.150.10">
    <property type="entry name" value="DNA-directed RNA polymerase, beta subunit, external 1 domain"/>
    <property type="match status" value="1"/>
</dbReference>
<dbReference type="Gene3D" id="2.40.270.10">
    <property type="entry name" value="DNA-directed RNA polymerase, subunit 2, domain 6"/>
    <property type="match status" value="2"/>
</dbReference>
<dbReference type="Gene3D" id="3.90.1800.10">
    <property type="entry name" value="RNA polymerase alpha subunit dimerisation domain"/>
    <property type="match status" value="1"/>
</dbReference>
<dbReference type="Gene3D" id="3.90.1110.10">
    <property type="entry name" value="RNA polymerase Rpb2, domain 2"/>
    <property type="match status" value="2"/>
</dbReference>
<dbReference type="HAMAP" id="MF_01321">
    <property type="entry name" value="RNApol_bact_RpoB"/>
    <property type="match status" value="1"/>
</dbReference>
<dbReference type="InterPro" id="IPR042107">
    <property type="entry name" value="DNA-dir_RNA_pol_bsu_ext_1_sf"/>
</dbReference>
<dbReference type="InterPro" id="IPR019462">
    <property type="entry name" value="DNA-dir_RNA_pol_bsu_external_1"/>
</dbReference>
<dbReference type="InterPro" id="IPR015712">
    <property type="entry name" value="DNA-dir_RNA_pol_su2"/>
</dbReference>
<dbReference type="InterPro" id="IPR007120">
    <property type="entry name" value="DNA-dir_RNAP_su2_dom"/>
</dbReference>
<dbReference type="InterPro" id="IPR037033">
    <property type="entry name" value="DNA-dir_RNAP_su2_hyb_sf"/>
</dbReference>
<dbReference type="InterPro" id="IPR010243">
    <property type="entry name" value="RNA_pol_bsu_bac"/>
</dbReference>
<dbReference type="InterPro" id="IPR007121">
    <property type="entry name" value="RNA_pol_bsu_CS"/>
</dbReference>
<dbReference type="InterPro" id="IPR007644">
    <property type="entry name" value="RNA_pol_bsu_protrusion"/>
</dbReference>
<dbReference type="InterPro" id="IPR007642">
    <property type="entry name" value="RNA_pol_Rpb2_2"/>
</dbReference>
<dbReference type="InterPro" id="IPR037034">
    <property type="entry name" value="RNA_pol_Rpb2_2_sf"/>
</dbReference>
<dbReference type="InterPro" id="IPR007645">
    <property type="entry name" value="RNA_pol_Rpb2_3"/>
</dbReference>
<dbReference type="InterPro" id="IPR007641">
    <property type="entry name" value="RNA_pol_Rpb2_7"/>
</dbReference>
<dbReference type="InterPro" id="IPR014724">
    <property type="entry name" value="RNA_pol_RPB2_OB-fold"/>
</dbReference>
<dbReference type="NCBIfam" id="NF001616">
    <property type="entry name" value="PRK00405.1"/>
    <property type="match status" value="1"/>
</dbReference>
<dbReference type="NCBIfam" id="TIGR02013">
    <property type="entry name" value="rpoB"/>
    <property type="match status" value="1"/>
</dbReference>
<dbReference type="PANTHER" id="PTHR20856">
    <property type="entry name" value="DNA-DIRECTED RNA POLYMERASE I SUBUNIT 2"/>
    <property type="match status" value="1"/>
</dbReference>
<dbReference type="Pfam" id="PF04563">
    <property type="entry name" value="RNA_pol_Rpb2_1"/>
    <property type="match status" value="1"/>
</dbReference>
<dbReference type="Pfam" id="PF04561">
    <property type="entry name" value="RNA_pol_Rpb2_2"/>
    <property type="match status" value="2"/>
</dbReference>
<dbReference type="Pfam" id="PF04565">
    <property type="entry name" value="RNA_pol_Rpb2_3"/>
    <property type="match status" value="1"/>
</dbReference>
<dbReference type="Pfam" id="PF10385">
    <property type="entry name" value="RNA_pol_Rpb2_45"/>
    <property type="match status" value="1"/>
</dbReference>
<dbReference type="Pfam" id="PF00562">
    <property type="entry name" value="RNA_pol_Rpb2_6"/>
    <property type="match status" value="1"/>
</dbReference>
<dbReference type="Pfam" id="PF04560">
    <property type="entry name" value="RNA_pol_Rpb2_7"/>
    <property type="match status" value="1"/>
</dbReference>
<dbReference type="SUPFAM" id="SSF64484">
    <property type="entry name" value="beta and beta-prime subunits of DNA dependent RNA-polymerase"/>
    <property type="match status" value="1"/>
</dbReference>
<dbReference type="PROSITE" id="PS01166">
    <property type="entry name" value="RNA_POL_BETA"/>
    <property type="match status" value="1"/>
</dbReference>
<gene>
    <name evidence="1" type="primary">rpoB</name>
    <name type="ordered locus">R01348</name>
    <name type="ORF">SMc01317</name>
</gene>
<evidence type="ECO:0000255" key="1">
    <source>
        <dbReference type="HAMAP-Rule" id="MF_01321"/>
    </source>
</evidence>
<reference key="1">
    <citation type="journal article" date="2001" name="Proc. Natl. Acad. Sci. U.S.A.">
        <title>Analysis of the chromosome sequence of the legume symbiont Sinorhizobium meliloti strain 1021.</title>
        <authorList>
            <person name="Capela D."/>
            <person name="Barloy-Hubler F."/>
            <person name="Gouzy J."/>
            <person name="Bothe G."/>
            <person name="Ampe F."/>
            <person name="Batut J."/>
            <person name="Boistard P."/>
            <person name="Becker A."/>
            <person name="Boutry M."/>
            <person name="Cadieu E."/>
            <person name="Dreano S."/>
            <person name="Gloux S."/>
            <person name="Godrie T."/>
            <person name="Goffeau A."/>
            <person name="Kahn D."/>
            <person name="Kiss E."/>
            <person name="Lelaure V."/>
            <person name="Masuy D."/>
            <person name="Pohl T."/>
            <person name="Portetelle D."/>
            <person name="Puehler A."/>
            <person name="Purnelle B."/>
            <person name="Ramsperger U."/>
            <person name="Renard C."/>
            <person name="Thebault P."/>
            <person name="Vandenbol M."/>
            <person name="Weidner S."/>
            <person name="Galibert F."/>
        </authorList>
    </citation>
    <scope>NUCLEOTIDE SEQUENCE [LARGE SCALE GENOMIC DNA]</scope>
    <source>
        <strain>1021</strain>
    </source>
</reference>
<reference key="2">
    <citation type="journal article" date="2001" name="Science">
        <title>The composite genome of the legume symbiont Sinorhizobium meliloti.</title>
        <authorList>
            <person name="Galibert F."/>
            <person name="Finan T.M."/>
            <person name="Long S.R."/>
            <person name="Puehler A."/>
            <person name="Abola P."/>
            <person name="Ampe F."/>
            <person name="Barloy-Hubler F."/>
            <person name="Barnett M.J."/>
            <person name="Becker A."/>
            <person name="Boistard P."/>
            <person name="Bothe G."/>
            <person name="Boutry M."/>
            <person name="Bowser L."/>
            <person name="Buhrmester J."/>
            <person name="Cadieu E."/>
            <person name="Capela D."/>
            <person name="Chain P."/>
            <person name="Cowie A."/>
            <person name="Davis R.W."/>
            <person name="Dreano S."/>
            <person name="Federspiel N.A."/>
            <person name="Fisher R.F."/>
            <person name="Gloux S."/>
            <person name="Godrie T."/>
            <person name="Goffeau A."/>
            <person name="Golding B."/>
            <person name="Gouzy J."/>
            <person name="Gurjal M."/>
            <person name="Hernandez-Lucas I."/>
            <person name="Hong A."/>
            <person name="Huizar L."/>
            <person name="Hyman R.W."/>
            <person name="Jones T."/>
            <person name="Kahn D."/>
            <person name="Kahn M.L."/>
            <person name="Kalman S."/>
            <person name="Keating D.H."/>
            <person name="Kiss E."/>
            <person name="Komp C."/>
            <person name="Lelaure V."/>
            <person name="Masuy D."/>
            <person name="Palm C."/>
            <person name="Peck M.C."/>
            <person name="Pohl T.M."/>
            <person name="Portetelle D."/>
            <person name="Purnelle B."/>
            <person name="Ramsperger U."/>
            <person name="Surzycki R."/>
            <person name="Thebault P."/>
            <person name="Vandenbol M."/>
            <person name="Vorhoelter F.J."/>
            <person name="Weidner S."/>
            <person name="Wells D.H."/>
            <person name="Wong K."/>
            <person name="Yeh K.-C."/>
            <person name="Batut J."/>
        </authorList>
    </citation>
    <scope>NUCLEOTIDE SEQUENCE [LARGE SCALE GENOMIC DNA]</scope>
    <source>
        <strain>1021</strain>
    </source>
</reference>
<comment type="function">
    <text evidence="1">DNA-dependent RNA polymerase catalyzes the transcription of DNA into RNA using the four ribonucleoside triphosphates as substrates.</text>
</comment>
<comment type="catalytic activity">
    <reaction evidence="1">
        <text>RNA(n) + a ribonucleoside 5'-triphosphate = RNA(n+1) + diphosphate</text>
        <dbReference type="Rhea" id="RHEA:21248"/>
        <dbReference type="Rhea" id="RHEA-COMP:14527"/>
        <dbReference type="Rhea" id="RHEA-COMP:17342"/>
        <dbReference type="ChEBI" id="CHEBI:33019"/>
        <dbReference type="ChEBI" id="CHEBI:61557"/>
        <dbReference type="ChEBI" id="CHEBI:140395"/>
        <dbReference type="EC" id="2.7.7.6"/>
    </reaction>
</comment>
<comment type="subunit">
    <text evidence="1">The RNAP catalytic core consists of 2 alpha, 1 beta, 1 beta' and 1 omega subunit. When a sigma factor is associated with the core the holoenzyme is formed, which can initiate transcription.</text>
</comment>
<comment type="similarity">
    <text evidence="1">Belongs to the RNA polymerase beta chain family.</text>
</comment>
<feature type="chain" id="PRO_0000047946" description="DNA-directed RNA polymerase subunit beta">
    <location>
        <begin position="1"/>
        <end position="1380"/>
    </location>
</feature>
<proteinExistence type="inferred from homology"/>
<sequence length="1380" mass="153518">MAQTLSFNGRRRVRKFFGKIPEVAEMPNLIEVQKASYDQFLMVDEPQGGRPDEGLQAVFKSVFPIKDFSGASMLEFVSYEFEAPKFDVEECRQRDLTYAAPLKVTLRLIVFDIDEDTGAKSIKDIKEQNVYMGDMPLMTDNGTFIVNGTERVIVSQMHRSPGVFFDHDKGKSHSSGKLLFAARVIPYRGSWLDIEFDAKDIVHARIDRRRKIPVTSLLMALGMDGEEILDTFYTKSLYQRDGEGWRVPFQPDALKGQKTLADMIDADTGEVVVESGKKLTPRLLRQLQEKGLKALKATDDDLYGNYLAEDVVNFETGEIYLEAGDEIDEKTLPVILSAGFDEIPVLDIDHINIGAYIRNTLSADKNENRQDALFDIYRVMRPGEPPTMDSAEAMFNALFFDAERYDLSAVGRVKMNMRLDLDVPDTVRTLRKEDILAVVKMLVELRDGKGEIDDIDNLGNRRVRSVGELMENQYRLGLLRMERAIKERMSSIEIDTVMPQDLINAKPAAAAVREFFGSSQLSQFMDQVNPLSEITHKRRLSALGPGGLTRERAGFEVRDVHPTHYGRICPIETPEGPNIGLINSLATFARVNKYGFIESPYRKIVDGKVTNDVVYLSAMEEAKYHVAQANSVLDDDGSFSEEFVVCRHAGEVMLAPRDNINLMDVSPKQLVSVAAALIPFLENDDANRALMGSNMQRQAVPLLRAEAPFVGTGMEPVVARDSGAAIAARRGGIVDQVDATRIVIRATEDLDPSKSGVDIYRLQKFQRSNQNTCVNQRPLVTVGDVINKGDIIADGPSTDLGDLALGRNALVAFMPWNGYNYEDSILLSERIVRDDVFTSIHIEEFEVMARDTKLGPEEITRDIPNVSEEALKNLDEAGIVYIGAEVQPGDILVGKITPKGESPMTPEEKLLRAIFGEKASDVRDTSMRMPPGTFGTVVEVRVFNRHGVEKDERAMAIEREEIERLAKDRDDEQAILDRNVYARLVDMLRGHVAVAGPKGFKKGTELSNVVISEYPRSQWWMFAIEDEKAQGEIEALRAQYDESKSRLEQRFMDKVEKVQRGDEMPPGVMKMVKVFVAVKRKIQPGDKMAGRHGNKGVVSRIVPIEDMPFLEDGTHVDVVLNPLGVPSRMNVGQILETHLGWACAGMGKKIGAMLDAYKAGADIQPLRDTIDSVIGSGPKGEPIKQYDDESIVRLAEQTRRGVSIATPVFDGAVEADVNEMLEQAGLKVTGQSTLYDGRTGETFDRQVTVGYIYMLKLNHLVDDKIHARSIGPYSLVTQQPLGGKAQFGGQRFGEMEVWALEAYGAAYTLQEMLTVKSDDVAGRTKVYEAIVRGDDTFEAGIPESFNVLVKEMRSLGLSVELENSKVDDVGSTAQLPDAAE</sequence>
<organism>
    <name type="scientific">Rhizobium meliloti (strain 1021)</name>
    <name type="common">Ensifer meliloti</name>
    <name type="synonym">Sinorhizobium meliloti</name>
    <dbReference type="NCBI Taxonomy" id="266834"/>
    <lineage>
        <taxon>Bacteria</taxon>
        <taxon>Pseudomonadati</taxon>
        <taxon>Pseudomonadota</taxon>
        <taxon>Alphaproteobacteria</taxon>
        <taxon>Hyphomicrobiales</taxon>
        <taxon>Rhizobiaceae</taxon>
        <taxon>Sinorhizobium/Ensifer group</taxon>
        <taxon>Sinorhizobium</taxon>
    </lineage>
</organism>
<name>RPOB_RHIME</name>
<protein>
    <recommendedName>
        <fullName evidence="1">DNA-directed RNA polymerase subunit beta</fullName>
        <shortName evidence="1">RNAP subunit beta</shortName>
        <ecNumber evidence="1">2.7.7.6</ecNumber>
    </recommendedName>
    <alternativeName>
        <fullName evidence="1">RNA polymerase subunit beta</fullName>
    </alternativeName>
    <alternativeName>
        <fullName evidence="1">Transcriptase subunit beta</fullName>
    </alternativeName>
</protein>
<keyword id="KW-0240">DNA-directed RNA polymerase</keyword>
<keyword id="KW-0548">Nucleotidyltransferase</keyword>
<keyword id="KW-1185">Reference proteome</keyword>
<keyword id="KW-0804">Transcription</keyword>
<keyword id="KW-0808">Transferase</keyword>